<feature type="chain" id="PRO_0000169503" description="Uncharacterized protein YhdV">
    <location>
        <begin position="1"/>
        <end position="73"/>
    </location>
</feature>
<feature type="transmembrane region" description="Helical" evidence="1">
    <location>
        <begin position="4"/>
        <end position="24"/>
    </location>
</feature>
<feature type="transmembrane region" description="Helical" evidence="1">
    <location>
        <begin position="51"/>
        <end position="71"/>
    </location>
</feature>
<proteinExistence type="inferred from homology"/>
<protein>
    <recommendedName>
        <fullName>Uncharacterized protein YhdV</fullName>
    </recommendedName>
</protein>
<reference key="1">
    <citation type="journal article" date="2001" name="Nature">
        <title>Genome sequence of enterohaemorrhagic Escherichia coli O157:H7.</title>
        <authorList>
            <person name="Perna N.T."/>
            <person name="Plunkett G. III"/>
            <person name="Burland V."/>
            <person name="Mau B."/>
            <person name="Glasner J.D."/>
            <person name="Rose D.J."/>
            <person name="Mayhew G.F."/>
            <person name="Evans P.S."/>
            <person name="Gregor J."/>
            <person name="Kirkpatrick H.A."/>
            <person name="Posfai G."/>
            <person name="Hackett J."/>
            <person name="Klink S."/>
            <person name="Boutin A."/>
            <person name="Shao Y."/>
            <person name="Miller L."/>
            <person name="Grotbeck E.J."/>
            <person name="Davis N.W."/>
            <person name="Lim A."/>
            <person name="Dimalanta E.T."/>
            <person name="Potamousis K."/>
            <person name="Apodaca J."/>
            <person name="Anantharaman T.S."/>
            <person name="Lin J."/>
            <person name="Yen G."/>
            <person name="Schwartz D.C."/>
            <person name="Welch R.A."/>
            <person name="Blattner F.R."/>
        </authorList>
    </citation>
    <scope>NUCLEOTIDE SEQUENCE [LARGE SCALE GENOMIC DNA]</scope>
    <source>
        <strain>O157:H7 / EDL933 / ATCC 700927 / EHEC</strain>
    </source>
</reference>
<reference key="2">
    <citation type="journal article" date="2001" name="DNA Res.">
        <title>Complete genome sequence of enterohemorrhagic Escherichia coli O157:H7 and genomic comparison with a laboratory strain K-12.</title>
        <authorList>
            <person name="Hayashi T."/>
            <person name="Makino K."/>
            <person name="Ohnishi M."/>
            <person name="Kurokawa K."/>
            <person name="Ishii K."/>
            <person name="Yokoyama K."/>
            <person name="Han C.-G."/>
            <person name="Ohtsubo E."/>
            <person name="Nakayama K."/>
            <person name="Murata T."/>
            <person name="Tanaka M."/>
            <person name="Tobe T."/>
            <person name="Iida T."/>
            <person name="Takami H."/>
            <person name="Honda T."/>
            <person name="Sasakawa C."/>
            <person name="Ogasawara N."/>
            <person name="Yasunaga T."/>
            <person name="Kuhara S."/>
            <person name="Shiba T."/>
            <person name="Hattori M."/>
            <person name="Shinagawa H."/>
        </authorList>
    </citation>
    <scope>NUCLEOTIDE SEQUENCE [LARGE SCALE GENOMIC DNA]</scope>
    <source>
        <strain>O157:H7 / Sakai / RIMD 0509952 / EHEC</strain>
    </source>
</reference>
<keyword id="KW-1003">Cell membrane</keyword>
<keyword id="KW-0472">Membrane</keyword>
<keyword id="KW-1185">Reference proteome</keyword>
<keyword id="KW-0812">Transmembrane</keyword>
<keyword id="KW-1133">Transmembrane helix</keyword>
<dbReference type="EMBL" id="AE005174">
    <property type="protein sequence ID" value="AAG58396.1"/>
    <property type="molecule type" value="Genomic_DNA"/>
</dbReference>
<dbReference type="EMBL" id="BA000007">
    <property type="protein sequence ID" value="BAB37563.1"/>
    <property type="molecule type" value="Genomic_DNA"/>
</dbReference>
<dbReference type="PIR" id="D91146">
    <property type="entry name" value="D91146"/>
</dbReference>
<dbReference type="PIR" id="H85991">
    <property type="entry name" value="H85991"/>
</dbReference>
<dbReference type="RefSeq" id="NP_312167.1">
    <property type="nucleotide sequence ID" value="NC_002695.1"/>
</dbReference>
<dbReference type="RefSeq" id="WP_000825639.1">
    <property type="nucleotide sequence ID" value="NZ_VOAI01000014.1"/>
</dbReference>
<dbReference type="STRING" id="155864.Z4628"/>
<dbReference type="GeneID" id="916012"/>
<dbReference type="KEGG" id="ece:Z4628"/>
<dbReference type="KEGG" id="ecs:ECs_4140"/>
<dbReference type="PATRIC" id="fig|386585.9.peg.4323"/>
<dbReference type="eggNOG" id="ENOG5032RY2">
    <property type="taxonomic scope" value="Bacteria"/>
</dbReference>
<dbReference type="HOGENOM" id="CLU_182391_0_0_6"/>
<dbReference type="OMA" id="VHTNTCV"/>
<dbReference type="Proteomes" id="UP000000558">
    <property type="component" value="Chromosome"/>
</dbReference>
<dbReference type="Proteomes" id="UP000002519">
    <property type="component" value="Chromosome"/>
</dbReference>
<dbReference type="GO" id="GO:0005886">
    <property type="term" value="C:plasma membrane"/>
    <property type="evidence" value="ECO:0007669"/>
    <property type="project" value="UniProtKB-SubCell"/>
</dbReference>
<dbReference type="PROSITE" id="PS51257">
    <property type="entry name" value="PROKAR_LIPOPROTEIN"/>
    <property type="match status" value="1"/>
</dbReference>
<sequence>MKRLIPVALLTALLAGCAHDSPCVPVYDDQGRLVHTNTCMKGTTQDNWETAGAIAGGAAAVAGLTMGIIALSK</sequence>
<gene>
    <name type="primary">yhdV</name>
    <name type="ordered locus">Z4628</name>
    <name type="ordered locus">ECs4140</name>
</gene>
<comment type="subcellular location">
    <subcellularLocation>
        <location evidence="2">Cell membrane</location>
        <topology evidence="3">Multi-pass membrane protein</topology>
    </subcellularLocation>
</comment>
<accession>P64623</accession>
<accession>P45765</accession>
<organism>
    <name type="scientific">Escherichia coli O157:H7</name>
    <dbReference type="NCBI Taxonomy" id="83334"/>
    <lineage>
        <taxon>Bacteria</taxon>
        <taxon>Pseudomonadati</taxon>
        <taxon>Pseudomonadota</taxon>
        <taxon>Gammaproteobacteria</taxon>
        <taxon>Enterobacterales</taxon>
        <taxon>Enterobacteriaceae</taxon>
        <taxon>Escherichia</taxon>
    </lineage>
</organism>
<name>YHDV_ECO57</name>
<evidence type="ECO:0000255" key="1"/>
<evidence type="ECO:0000255" key="2">
    <source>
        <dbReference type="PROSITE-ProRule" id="PRU00303"/>
    </source>
</evidence>
<evidence type="ECO:0000305" key="3"/>